<evidence type="ECO:0000255" key="1">
    <source>
        <dbReference type="HAMAP-Rule" id="MF_01382"/>
    </source>
</evidence>
<dbReference type="EC" id="7.4.2.8" evidence="1"/>
<dbReference type="EMBL" id="CP000611">
    <property type="protein sequence ID" value="ABQ73588.1"/>
    <property type="molecule type" value="Genomic_DNA"/>
</dbReference>
<dbReference type="SMR" id="A5U3I8"/>
<dbReference type="KEGG" id="mra:MRA_1833"/>
<dbReference type="eggNOG" id="COG0653">
    <property type="taxonomic scope" value="Bacteria"/>
</dbReference>
<dbReference type="HOGENOM" id="CLU_005314_3_2_11"/>
<dbReference type="Proteomes" id="UP000001988">
    <property type="component" value="Chromosome"/>
</dbReference>
<dbReference type="GO" id="GO:0031522">
    <property type="term" value="C:cell envelope Sec protein transport complex"/>
    <property type="evidence" value="ECO:0007669"/>
    <property type="project" value="TreeGrafter"/>
</dbReference>
<dbReference type="GO" id="GO:0005829">
    <property type="term" value="C:cytosol"/>
    <property type="evidence" value="ECO:0007669"/>
    <property type="project" value="TreeGrafter"/>
</dbReference>
<dbReference type="GO" id="GO:0005886">
    <property type="term" value="C:plasma membrane"/>
    <property type="evidence" value="ECO:0007669"/>
    <property type="project" value="UniProtKB-SubCell"/>
</dbReference>
<dbReference type="GO" id="GO:0005524">
    <property type="term" value="F:ATP binding"/>
    <property type="evidence" value="ECO:0007669"/>
    <property type="project" value="UniProtKB-UniRule"/>
</dbReference>
<dbReference type="GO" id="GO:0008564">
    <property type="term" value="F:protein-exporting ATPase activity"/>
    <property type="evidence" value="ECO:0007669"/>
    <property type="project" value="UniProtKB-EC"/>
</dbReference>
<dbReference type="GO" id="GO:0065002">
    <property type="term" value="P:intracellular protein transmembrane transport"/>
    <property type="evidence" value="ECO:0007669"/>
    <property type="project" value="UniProtKB-UniRule"/>
</dbReference>
<dbReference type="GO" id="GO:0017038">
    <property type="term" value="P:protein import"/>
    <property type="evidence" value="ECO:0007669"/>
    <property type="project" value="InterPro"/>
</dbReference>
<dbReference type="GO" id="GO:0006605">
    <property type="term" value="P:protein targeting"/>
    <property type="evidence" value="ECO:0007669"/>
    <property type="project" value="UniProtKB-UniRule"/>
</dbReference>
<dbReference type="GO" id="GO:0043952">
    <property type="term" value="P:protein transport by the Sec complex"/>
    <property type="evidence" value="ECO:0007669"/>
    <property type="project" value="TreeGrafter"/>
</dbReference>
<dbReference type="CDD" id="cd17928">
    <property type="entry name" value="DEXDc_SecA"/>
    <property type="match status" value="1"/>
</dbReference>
<dbReference type="CDD" id="cd18803">
    <property type="entry name" value="SF2_C_secA"/>
    <property type="match status" value="1"/>
</dbReference>
<dbReference type="FunFam" id="3.40.50.300:FF:000429">
    <property type="entry name" value="Preprotein translocase subunit SecA"/>
    <property type="match status" value="1"/>
</dbReference>
<dbReference type="FunFam" id="1.10.3060.10:FF:000010">
    <property type="entry name" value="Protein translocase subunit SecA 2"/>
    <property type="match status" value="1"/>
</dbReference>
<dbReference type="Gene3D" id="1.10.3060.10">
    <property type="entry name" value="Helical scaffold and wing domains of SecA"/>
    <property type="match status" value="1"/>
</dbReference>
<dbReference type="Gene3D" id="3.40.50.300">
    <property type="entry name" value="P-loop containing nucleotide triphosphate hydrolases"/>
    <property type="match status" value="3"/>
</dbReference>
<dbReference type="Gene3D" id="3.90.1440.10">
    <property type="entry name" value="SecA, preprotein cross-linking domain"/>
    <property type="match status" value="1"/>
</dbReference>
<dbReference type="HAMAP" id="MF_01382">
    <property type="entry name" value="SecA"/>
    <property type="match status" value="1"/>
</dbReference>
<dbReference type="InterPro" id="IPR014001">
    <property type="entry name" value="Helicase_ATP-bd"/>
</dbReference>
<dbReference type="InterPro" id="IPR001650">
    <property type="entry name" value="Helicase_C-like"/>
</dbReference>
<dbReference type="InterPro" id="IPR027417">
    <property type="entry name" value="P-loop_NTPase"/>
</dbReference>
<dbReference type="InterPro" id="IPR000185">
    <property type="entry name" value="SecA"/>
</dbReference>
<dbReference type="InterPro" id="IPR026389">
    <property type="entry name" value="SecA_Actinobact-type"/>
</dbReference>
<dbReference type="InterPro" id="IPR020937">
    <property type="entry name" value="SecA_CS"/>
</dbReference>
<dbReference type="InterPro" id="IPR011115">
    <property type="entry name" value="SecA_DEAD"/>
</dbReference>
<dbReference type="InterPro" id="IPR014018">
    <property type="entry name" value="SecA_motor_DEAD"/>
</dbReference>
<dbReference type="InterPro" id="IPR011130">
    <property type="entry name" value="SecA_preprotein_X-link_dom"/>
</dbReference>
<dbReference type="InterPro" id="IPR044722">
    <property type="entry name" value="SecA_SF2_C"/>
</dbReference>
<dbReference type="InterPro" id="IPR011116">
    <property type="entry name" value="SecA_Wing/Scaffold"/>
</dbReference>
<dbReference type="InterPro" id="IPR036266">
    <property type="entry name" value="SecA_Wing/Scaffold_sf"/>
</dbReference>
<dbReference type="InterPro" id="IPR036670">
    <property type="entry name" value="SecA_X-link_sf"/>
</dbReference>
<dbReference type="NCBIfam" id="TIGR04221">
    <property type="entry name" value="SecA2_Mycobac"/>
    <property type="match status" value="1"/>
</dbReference>
<dbReference type="PANTHER" id="PTHR30612:SF0">
    <property type="entry name" value="CHLOROPLAST PROTEIN-TRANSPORTING ATPASE"/>
    <property type="match status" value="1"/>
</dbReference>
<dbReference type="PANTHER" id="PTHR30612">
    <property type="entry name" value="SECA INNER MEMBRANE COMPONENT OF SEC PROTEIN SECRETION SYSTEM"/>
    <property type="match status" value="1"/>
</dbReference>
<dbReference type="Pfam" id="PF21090">
    <property type="entry name" value="P-loop_SecA"/>
    <property type="match status" value="1"/>
</dbReference>
<dbReference type="Pfam" id="PF07517">
    <property type="entry name" value="SecA_DEAD"/>
    <property type="match status" value="1"/>
</dbReference>
<dbReference type="Pfam" id="PF01043">
    <property type="entry name" value="SecA_PP_bind"/>
    <property type="match status" value="1"/>
</dbReference>
<dbReference type="Pfam" id="PF07516">
    <property type="entry name" value="SecA_SW"/>
    <property type="match status" value="1"/>
</dbReference>
<dbReference type="PRINTS" id="PR00906">
    <property type="entry name" value="SECA"/>
</dbReference>
<dbReference type="SMART" id="SM00957">
    <property type="entry name" value="SecA_DEAD"/>
    <property type="match status" value="1"/>
</dbReference>
<dbReference type="SMART" id="SM00958">
    <property type="entry name" value="SecA_PP_bind"/>
    <property type="match status" value="1"/>
</dbReference>
<dbReference type="SUPFAM" id="SSF81886">
    <property type="entry name" value="Helical scaffold and wing domains of SecA"/>
    <property type="match status" value="1"/>
</dbReference>
<dbReference type="SUPFAM" id="SSF52540">
    <property type="entry name" value="P-loop containing nucleoside triphosphate hydrolases"/>
    <property type="match status" value="2"/>
</dbReference>
<dbReference type="SUPFAM" id="SSF81767">
    <property type="entry name" value="Pre-protein crosslinking domain of SecA"/>
    <property type="match status" value="1"/>
</dbReference>
<dbReference type="PROSITE" id="PS01312">
    <property type="entry name" value="SECA"/>
    <property type="match status" value="1"/>
</dbReference>
<dbReference type="PROSITE" id="PS51196">
    <property type="entry name" value="SECA_MOTOR_DEAD"/>
    <property type="match status" value="1"/>
</dbReference>
<reference key="1">
    <citation type="journal article" date="2008" name="PLoS ONE">
        <title>Genetic basis of virulence attenuation revealed by comparative genomic analysis of Mycobacterium tuberculosis strain H37Ra versus H37Rv.</title>
        <authorList>
            <person name="Zheng H."/>
            <person name="Lu L."/>
            <person name="Wang B."/>
            <person name="Pu S."/>
            <person name="Zhang X."/>
            <person name="Zhu G."/>
            <person name="Shi W."/>
            <person name="Zhang L."/>
            <person name="Wang H."/>
            <person name="Wang S."/>
            <person name="Zhao G."/>
            <person name="Zhang Y."/>
        </authorList>
    </citation>
    <scope>NUCLEOTIDE SEQUENCE [LARGE SCALE GENOMIC DNA]</scope>
    <source>
        <strain>ATCC 25177 / H37Ra</strain>
    </source>
</reference>
<comment type="function">
    <text evidence="1">Part of the Sec protein translocase complex. Interacts with the SecYEG preprotein conducting channel. Has a central role in coupling the hydrolysis of ATP to the transfer of proteins into and across the cell membrane, serving as an ATP-driven molecular motor driving the stepwise translocation of polypeptide chains across the membrane.</text>
</comment>
<comment type="catalytic activity">
    <reaction evidence="1">
        <text>ATP + H2O + cellular proteinSide 1 = ADP + phosphate + cellular proteinSide 2.</text>
        <dbReference type="EC" id="7.4.2.8"/>
    </reaction>
</comment>
<comment type="subunit">
    <text evidence="1">Monomer and homodimer. Part of the essential Sec protein translocation apparatus which comprises SecA, SecYEG and auxiliary proteins SecDF. Other proteins may also be involved.</text>
</comment>
<comment type="subcellular location">
    <subcellularLocation>
        <location evidence="1">Cell membrane</location>
        <topology evidence="1">Peripheral membrane protein</topology>
        <orientation evidence="1">Cytoplasmic side</orientation>
    </subcellularLocation>
    <subcellularLocation>
        <location evidence="1">Cytoplasm</location>
    </subcellularLocation>
    <text evidence="1">Distribution is 50-50.</text>
</comment>
<comment type="similarity">
    <text evidence="1">Belongs to the SecA family.</text>
</comment>
<keyword id="KW-0067">ATP-binding</keyword>
<keyword id="KW-1003">Cell membrane</keyword>
<keyword id="KW-0963">Cytoplasm</keyword>
<keyword id="KW-0472">Membrane</keyword>
<keyword id="KW-0547">Nucleotide-binding</keyword>
<keyword id="KW-0653">Protein transport</keyword>
<keyword id="KW-1185">Reference proteome</keyword>
<keyword id="KW-1278">Translocase</keyword>
<keyword id="KW-0811">Translocation</keyword>
<keyword id="KW-0813">Transport</keyword>
<accession>A5U3I8</accession>
<name>SECA2_MYCTA</name>
<gene>
    <name evidence="1" type="primary">secA2</name>
    <name type="ordered locus">MRA_1833</name>
</gene>
<protein>
    <recommendedName>
        <fullName evidence="1">Protein translocase subunit SecA 2</fullName>
        <ecNumber evidence="1">7.4.2.8</ecNumber>
    </recommendedName>
</protein>
<proteinExistence type="inferred from homology"/>
<feature type="chain" id="PRO_0000318390" description="Protein translocase subunit SecA 2">
    <location>
        <begin position="1"/>
        <end position="808"/>
    </location>
</feature>
<feature type="binding site" evidence="1">
    <location>
        <position position="124"/>
    </location>
    <ligand>
        <name>ATP</name>
        <dbReference type="ChEBI" id="CHEBI:30616"/>
    </ligand>
</feature>
<feature type="binding site" evidence="1">
    <location>
        <begin position="142"/>
        <end position="146"/>
    </location>
    <ligand>
        <name>ATP</name>
        <dbReference type="ChEBI" id="CHEBI:30616"/>
    </ligand>
</feature>
<feature type="binding site" evidence="1">
    <location>
        <position position="535"/>
    </location>
    <ligand>
        <name>ATP</name>
        <dbReference type="ChEBI" id="CHEBI:30616"/>
    </ligand>
</feature>
<sequence>MNVHGCPRIAACRCTDTHPRGRPAFAYRWFVPKTTRAQPGRLSSRFWRLLGASTEKNRSRSLADVTASAEYDKEAADLSDEKLRKAAGLLNLDDLAESADIPQFLAIAREAAERRTGLRPFDVQLLGALRMLAGDVIEMATGEGKTLAGAIAAAGYALAGRHVHVVTINDYLARRDAEWMGPLLDAMGLTVGWITADSTPDERRTAYDRDVTYASVNEIGFDVLRDQLVTDVNDLVSPNPDVALIDEADSVLVDEALVPLVLAGTTHRETPRLEIIRLVAELVGDKDADEYFATDSDNRNVHLTEHGARKVEKALGGIDLYSEEHVGTTLTEVNVALHAHVLLQRDVHYIVRDDAVHLINASRGRIAQLQRWPDGLQAAVEAKEGIETTETGEVLDTITVQALINRYATVCGMTGTALAAGEQLRQFYQLGVSPIPPNKPNIREDEADRVYITTAAKNDGIVEHITEVHQRGQPVLVGTRDVAESEELHERLVRRGVPAVVLNAKNDAEEARVIAEAGKYGAVTVSTQMAGRGTDIRLGGSDEADHDRVAELGGLHVVGTGRHHTERLDNQLRGRAGRQGDPGSSVFFSSWEDDVVAANLDHNKLPMATDENGRIVSPRTGSLLDHAQRVAEGRLLDVHANTWRYNQLIAQQRAIIVERRNTLLRTVTAREELAELAPKRYEELSDKVSEERLETICRQIMLYHLDRGWADHLAYLADIRESIHLRALGRQNPLDEFHRMAVDAFASLAADAIEAAQQTFETANVLDHEPGLDLSKLARPTSTWTYMVNDNPLSDDTLSALSLPGVFR</sequence>
<organism>
    <name type="scientific">Mycobacterium tuberculosis (strain ATCC 25177 / H37Ra)</name>
    <dbReference type="NCBI Taxonomy" id="419947"/>
    <lineage>
        <taxon>Bacteria</taxon>
        <taxon>Bacillati</taxon>
        <taxon>Actinomycetota</taxon>
        <taxon>Actinomycetes</taxon>
        <taxon>Mycobacteriales</taxon>
        <taxon>Mycobacteriaceae</taxon>
        <taxon>Mycobacterium</taxon>
        <taxon>Mycobacterium tuberculosis complex</taxon>
    </lineage>
</organism>